<keyword id="KW-0520">NAD</keyword>
<keyword id="KW-0560">Oxidoreductase</keyword>
<dbReference type="EC" id="1.2.1.88" evidence="1"/>
<dbReference type="EMBL" id="CP000764">
    <property type="protein sequence ID" value="ABS20652.1"/>
    <property type="molecule type" value="Genomic_DNA"/>
</dbReference>
<dbReference type="SMR" id="A7GKJ4"/>
<dbReference type="STRING" id="315749.Bcer98_0289"/>
<dbReference type="GeneID" id="33895643"/>
<dbReference type="KEGG" id="bcy:Bcer98_0289"/>
<dbReference type="eggNOG" id="COG1012">
    <property type="taxonomic scope" value="Bacteria"/>
</dbReference>
<dbReference type="HOGENOM" id="CLU_005391_0_0_9"/>
<dbReference type="OrthoDB" id="9762913at2"/>
<dbReference type="UniPathway" id="UPA00261">
    <property type="reaction ID" value="UER00374"/>
</dbReference>
<dbReference type="Proteomes" id="UP000002300">
    <property type="component" value="Chromosome"/>
</dbReference>
<dbReference type="GO" id="GO:0009898">
    <property type="term" value="C:cytoplasmic side of plasma membrane"/>
    <property type="evidence" value="ECO:0007669"/>
    <property type="project" value="TreeGrafter"/>
</dbReference>
<dbReference type="GO" id="GO:0003842">
    <property type="term" value="F:1-pyrroline-5-carboxylate dehydrogenase activity"/>
    <property type="evidence" value="ECO:0007669"/>
    <property type="project" value="UniProtKB-UniRule"/>
</dbReference>
<dbReference type="GO" id="GO:0006537">
    <property type="term" value="P:glutamate biosynthetic process"/>
    <property type="evidence" value="ECO:0007669"/>
    <property type="project" value="UniProtKB-UniRule"/>
</dbReference>
<dbReference type="GO" id="GO:0010133">
    <property type="term" value="P:proline catabolic process to glutamate"/>
    <property type="evidence" value="ECO:0007669"/>
    <property type="project" value="UniProtKB-UniPathway"/>
</dbReference>
<dbReference type="CDD" id="cd07124">
    <property type="entry name" value="ALDH_PutA-P5CDH-RocA"/>
    <property type="match status" value="1"/>
</dbReference>
<dbReference type="FunFam" id="3.40.309.10:FF:000005">
    <property type="entry name" value="1-pyrroline-5-carboxylate dehydrogenase 1"/>
    <property type="match status" value="1"/>
</dbReference>
<dbReference type="FunFam" id="3.40.605.10:FF:000045">
    <property type="entry name" value="1-pyrroline-5-carboxylate dehydrogenase 1"/>
    <property type="match status" value="1"/>
</dbReference>
<dbReference type="Gene3D" id="3.40.605.10">
    <property type="entry name" value="Aldehyde Dehydrogenase, Chain A, domain 1"/>
    <property type="match status" value="1"/>
</dbReference>
<dbReference type="Gene3D" id="3.40.309.10">
    <property type="entry name" value="Aldehyde Dehydrogenase, Chain A, domain 2"/>
    <property type="match status" value="1"/>
</dbReference>
<dbReference type="HAMAP" id="MF_00733">
    <property type="entry name" value="RocA"/>
    <property type="match status" value="1"/>
</dbReference>
<dbReference type="InterPro" id="IPR016161">
    <property type="entry name" value="Ald_DH/histidinol_DH"/>
</dbReference>
<dbReference type="InterPro" id="IPR016163">
    <property type="entry name" value="Ald_DH_C"/>
</dbReference>
<dbReference type="InterPro" id="IPR016160">
    <property type="entry name" value="Ald_DH_CS_CYS"/>
</dbReference>
<dbReference type="InterPro" id="IPR029510">
    <property type="entry name" value="Ald_DH_CS_GLU"/>
</dbReference>
<dbReference type="InterPro" id="IPR016162">
    <property type="entry name" value="Ald_DH_N"/>
</dbReference>
<dbReference type="InterPro" id="IPR015590">
    <property type="entry name" value="Aldehyde_DH_dom"/>
</dbReference>
<dbReference type="InterPro" id="IPR050485">
    <property type="entry name" value="Proline_metab_enzyme"/>
</dbReference>
<dbReference type="InterPro" id="IPR005932">
    <property type="entry name" value="RocA"/>
</dbReference>
<dbReference type="InterPro" id="IPR047597">
    <property type="entry name" value="RocA_bacillales"/>
</dbReference>
<dbReference type="NCBIfam" id="TIGR01237">
    <property type="entry name" value="D1pyr5carbox2"/>
    <property type="match status" value="1"/>
</dbReference>
<dbReference type="NCBIfam" id="NF002852">
    <property type="entry name" value="PRK03137.1"/>
    <property type="match status" value="1"/>
</dbReference>
<dbReference type="PANTHER" id="PTHR42862">
    <property type="entry name" value="DELTA-1-PYRROLINE-5-CARBOXYLATE DEHYDROGENASE 1, ISOFORM A-RELATED"/>
    <property type="match status" value="1"/>
</dbReference>
<dbReference type="PANTHER" id="PTHR42862:SF1">
    <property type="entry name" value="DELTA-1-PYRROLINE-5-CARBOXYLATE DEHYDROGENASE 2, ISOFORM A-RELATED"/>
    <property type="match status" value="1"/>
</dbReference>
<dbReference type="Pfam" id="PF00171">
    <property type="entry name" value="Aldedh"/>
    <property type="match status" value="1"/>
</dbReference>
<dbReference type="SUPFAM" id="SSF53720">
    <property type="entry name" value="ALDH-like"/>
    <property type="match status" value="1"/>
</dbReference>
<dbReference type="PROSITE" id="PS00070">
    <property type="entry name" value="ALDEHYDE_DEHYDR_CYS"/>
    <property type="match status" value="1"/>
</dbReference>
<dbReference type="PROSITE" id="PS00687">
    <property type="entry name" value="ALDEHYDE_DEHYDR_GLU"/>
    <property type="match status" value="1"/>
</dbReference>
<accession>A7GKJ4</accession>
<sequence length="515" mass="56146">MVVAYKHEPFTDFSVEANKLAFEEGLKKVESYLGQDYPLIIGGEKITTEDKIVSVNPANKEEVIGSVSKASRELAEKAMQVADETFQTWRKSKPEMRADILFRAAAIVRRRKHEFSAILVKEAGKPWNEADADTAEAIDFMEYYGRQMLKLKDGIPVESRPIEYNRFSYIPLGVGVIISPWNFPFAIMAGMTTAALVSGNTVLLKPASTTPVVAAKFMEVLEEAGLPAGVVNFIPGSGSEVGDYLVDHPRTRFISFTGSRDVGIRIYERAAKVHPGQIWLKRVIAEMGGKDTIVVDKEADLELAAKSIVASAFGFSGQKCSACSRAVIHEEVYDQVLNRAVELTKELTVGNPAEKGTNMGPVNDQAAFDKVMSYVAIGKEEGKIVAGGEGDDSKGWFIQPTIVADVAEDARLMKEEIFGPVVAFCKAKDFDHALAIANNTEYGLTGAVISNNRAHIEKAREDFHVGNLYFNRGCTGAIVGYQPFGGFNMSGTDSKAGGPDYLALHMQAKTTSEML</sequence>
<protein>
    <recommendedName>
        <fullName evidence="1">1-pyrroline-5-carboxylate dehydrogenase</fullName>
        <shortName evidence="1">P5C dehydrogenase</shortName>
        <ecNumber evidence="1">1.2.1.88</ecNumber>
    </recommendedName>
    <alternativeName>
        <fullName evidence="1">L-glutamate gamma-semialdehyde dehydrogenase</fullName>
    </alternativeName>
</protein>
<reference key="1">
    <citation type="journal article" date="2008" name="Chem. Biol. Interact.">
        <title>Extending the Bacillus cereus group genomics to putative food-borne pathogens of different toxicity.</title>
        <authorList>
            <person name="Lapidus A."/>
            <person name="Goltsman E."/>
            <person name="Auger S."/>
            <person name="Galleron N."/>
            <person name="Segurens B."/>
            <person name="Dossat C."/>
            <person name="Land M.L."/>
            <person name="Broussolle V."/>
            <person name="Brillard J."/>
            <person name="Guinebretiere M.-H."/>
            <person name="Sanchis V."/>
            <person name="Nguen-the C."/>
            <person name="Lereclus D."/>
            <person name="Richardson P."/>
            <person name="Wincker P."/>
            <person name="Weissenbach J."/>
            <person name="Ehrlich S.D."/>
            <person name="Sorokin A."/>
        </authorList>
    </citation>
    <scope>NUCLEOTIDE SEQUENCE [LARGE SCALE GENOMIC DNA]</scope>
    <source>
        <strain>DSM 22905 / CIP 110041 / 391-98 / NVH 391-98</strain>
    </source>
</reference>
<proteinExistence type="inferred from homology"/>
<comment type="catalytic activity">
    <reaction evidence="1">
        <text>L-glutamate 5-semialdehyde + NAD(+) + H2O = L-glutamate + NADH + 2 H(+)</text>
        <dbReference type="Rhea" id="RHEA:30235"/>
        <dbReference type="ChEBI" id="CHEBI:15377"/>
        <dbReference type="ChEBI" id="CHEBI:15378"/>
        <dbReference type="ChEBI" id="CHEBI:29985"/>
        <dbReference type="ChEBI" id="CHEBI:57540"/>
        <dbReference type="ChEBI" id="CHEBI:57945"/>
        <dbReference type="ChEBI" id="CHEBI:58066"/>
        <dbReference type="EC" id="1.2.1.88"/>
    </reaction>
</comment>
<comment type="pathway">
    <text evidence="1">Amino-acid degradation; L-proline degradation into L-glutamate; L-glutamate from L-proline: step 2/2.</text>
</comment>
<comment type="similarity">
    <text evidence="1">Belongs to the aldehyde dehydrogenase family. RocA subfamily.</text>
</comment>
<gene>
    <name evidence="1" type="primary">rocA</name>
    <name type="ordered locus">Bcer98_0289</name>
</gene>
<evidence type="ECO:0000255" key="1">
    <source>
        <dbReference type="HAMAP-Rule" id="MF_00733"/>
    </source>
</evidence>
<name>ROCA_BACCN</name>
<feature type="chain" id="PRO_1000083339" description="1-pyrroline-5-carboxylate dehydrogenase">
    <location>
        <begin position="1"/>
        <end position="515"/>
    </location>
</feature>
<feature type="active site" evidence="1">
    <location>
        <position position="286"/>
    </location>
</feature>
<feature type="active site" evidence="1">
    <location>
        <position position="320"/>
    </location>
</feature>
<organism>
    <name type="scientific">Bacillus cytotoxicus (strain DSM 22905 / CIP 110041 / 391-98 / NVH 391-98)</name>
    <dbReference type="NCBI Taxonomy" id="315749"/>
    <lineage>
        <taxon>Bacteria</taxon>
        <taxon>Bacillati</taxon>
        <taxon>Bacillota</taxon>
        <taxon>Bacilli</taxon>
        <taxon>Bacillales</taxon>
        <taxon>Bacillaceae</taxon>
        <taxon>Bacillus</taxon>
        <taxon>Bacillus cereus group</taxon>
    </lineage>
</organism>